<organism evidence="23">
    <name type="scientific">Caenorhabditis elegans</name>
    <dbReference type="NCBI Taxonomy" id="6239"/>
    <lineage>
        <taxon>Eukaryota</taxon>
        <taxon>Metazoa</taxon>
        <taxon>Ecdysozoa</taxon>
        <taxon>Nematoda</taxon>
        <taxon>Chromadorea</taxon>
        <taxon>Rhabditida</taxon>
        <taxon>Rhabditina</taxon>
        <taxon>Rhabditomorpha</taxon>
        <taxon>Rhabditoidea</taxon>
        <taxon>Rhabditidae</taxon>
        <taxon>Peloderinae</taxon>
        <taxon>Caenorhabditis</taxon>
    </lineage>
</organism>
<gene>
    <name evidence="25" type="primary">daf-12</name>
    <name evidence="25" type="synonym">daf-20</name>
    <name evidence="25" type="synonym">mig-7</name>
    <name evidence="25" type="synonym">XL285</name>
    <name evidence="25" type="ORF">F11A1.3</name>
</gene>
<name>DAF12_CAEEL</name>
<accession>G5EFF5</accession>
<accession>G5EBZ6</accession>
<accession>G5EG55</accession>
<accession>Q2XN07</accession>
<comment type="function">
    <text evidence="5 7 8 9 10 11 12 14 15 16 17 18 19 20">Nuclear receptor which binds directly to response elements in target gene promoters (PubMed:10859169, PubMed:15314028, PubMed:15383841, PubMed:15489294, PubMed:15611047, PubMed:16626392, PubMed:19828440, PubMed:21814518, PubMed:9477318). Activity is modulated by binding of steroid hormone ligands that include dafachronic acids (PubMed:16529801). Regulates expression of genes involved in postembryonic development and the dauer diapause, in response to environmental cues (PubMed:10859169, PubMed:15383841, PubMed:15489294, PubMed:16626392, PubMed:19828440, PubMed:21814518, PubMed:9477318). Inhibits the expression of let-7 family members when bound to corepressor din-1s which is an isoform of din-1 (PubMed:19828440). Plays a role in controlling the timing of seam cell development during the larval stages (PubMed:21471153). Has a role in the immune response to bacterial infection, via regulation of let-7 miRNAs (PubMed:23990780). Controls expression of genes that promote the aerobic catabolism of fatty acids for reproductive growth (PubMed:25774872). May be involved in thermotolerance (PubMed:24957743).</text>
</comment>
<comment type="subunit">
    <text evidence="7">Interacts with din-1 isoform d.</text>
</comment>
<comment type="subcellular location">
    <subcellularLocation>
        <location evidence="1 5 10 17">Nucleus</location>
    </subcellularLocation>
    <text evidence="5 17">Diffuse expression during mitosis (PubMed:10859169). Increased nuclear accumulation upon infection by E.coli (PubMed:23990780).</text>
</comment>
<comment type="alternative products">
    <event type="alternative splicing"/>
    <event type="alternative initiation"/>
    <isoform>
        <id>G5EFF5-1</id>
        <name evidence="25">a</name>
        <name evidence="21">A1</name>
        <sequence type="displayed"/>
    </isoform>
    <isoform>
        <id>G5EFF5-2</id>
        <name evidence="26">b</name>
        <name evidence="21">A2</name>
        <sequence type="described" ref="VSP_057859"/>
    </isoform>
    <isoform>
        <id>G5EFF5-3</id>
        <name evidence="27">c</name>
        <name evidence="21">B</name>
        <sequence type="described" ref="VSP_057858"/>
    </isoform>
    <isoform>
        <id>G5EFF5-4</id>
        <name evidence="28">d</name>
        <sequence type="described" ref="VSP_057860"/>
    </isoform>
</comment>
<comment type="tissue specificity">
    <text evidence="5 6 17">Expressed throughout muscles of the pharynx (PubMed:11072073). Expressed in epidermal seam cells, the vulva, head neurons, mature spermatheca, uterus and intestine (PubMed:10859169, PubMed:23990780).</text>
</comment>
<comment type="developmental stage">
    <text evidence="5">Widely expressed from embryo through to adult stages; peak expression levels seem to occur during larval stage L2.</text>
</comment>
<comment type="disruption phenotype">
    <text evidence="5 8 12 13 17 20">Reduced lifespan associated with accelerated aging and increased tissue deterioration (PubMed:16626392). Defective dauer formation (PubMed:10859169, PubMed:9477318). In the absence of cholesterol, arrest with abnormal cuticle formation (PubMed:15383841). Increased resistance to P.aeruginosa infection possibly due to elevated expression of antimicrobial genes (PubMed:23990780). Prevents increase in the number of muscle arm extension in a daf-2 (e1375) background (PubMed:18436204). RNAi-mediated knockdown results in reduced lifespan, but increased resistance to bacterial infection (PubMed:23990780).</text>
</comment>
<comment type="miscellaneous">
    <molecule>Isoform b</molecule>
    <text evidence="22">Produced by alternative initiation at Met-60 of isoform a.</text>
</comment>
<comment type="miscellaneous">
    <molecule>Isoform c</molecule>
    <text evidence="22">Produced by alternative initiation at Met-487 of isoform a.</text>
</comment>
<comment type="miscellaneous">
    <molecule>Isoform d</molecule>
    <text evidence="22">Produced by alternative splicing.</text>
</comment>
<comment type="similarity">
    <text evidence="3">Belongs to the nuclear hormone receptor family.</text>
</comment>
<feature type="chain" id="PRO_0000433989" description="Nuclear hormone receptor family member daf-12" evidence="22">
    <location>
        <begin position="1"/>
        <end position="753"/>
    </location>
</feature>
<feature type="domain" description="NR LBD" evidence="2">
    <location>
        <begin position="516"/>
        <end position="753"/>
    </location>
</feature>
<feature type="DNA-binding region" description="Nuclear receptor" evidence="1">
    <location>
        <begin position="115"/>
        <end position="190"/>
    </location>
</feature>
<feature type="zinc finger region" description="NR C4-type" evidence="1">
    <location>
        <begin position="118"/>
        <end position="138"/>
    </location>
</feature>
<feature type="zinc finger region" description="NR C4-type" evidence="1">
    <location>
        <begin position="154"/>
        <end position="173"/>
    </location>
</feature>
<feature type="region of interest" description="Disordered" evidence="4">
    <location>
        <begin position="1"/>
        <end position="109"/>
    </location>
</feature>
<feature type="region of interest" description="Disordered" evidence="4">
    <location>
        <begin position="198"/>
        <end position="251"/>
    </location>
</feature>
<feature type="region of interest" description="Disordered" evidence="4">
    <location>
        <begin position="266"/>
        <end position="314"/>
    </location>
</feature>
<feature type="region of interest" description="Disordered" evidence="4">
    <location>
        <begin position="376"/>
        <end position="410"/>
    </location>
</feature>
<feature type="short sequence motif" description="Nuclear localization signal" evidence="10">
    <location>
        <begin position="191"/>
        <end position="206"/>
    </location>
</feature>
<feature type="compositionally biased region" description="Basic and acidic residues" evidence="4">
    <location>
        <begin position="20"/>
        <end position="29"/>
    </location>
</feature>
<feature type="compositionally biased region" description="Basic residues" evidence="4">
    <location>
        <begin position="30"/>
        <end position="44"/>
    </location>
</feature>
<feature type="compositionally biased region" description="Polar residues" evidence="4">
    <location>
        <begin position="201"/>
        <end position="211"/>
    </location>
</feature>
<feature type="compositionally biased region" description="Low complexity" evidence="4">
    <location>
        <begin position="212"/>
        <end position="227"/>
    </location>
</feature>
<feature type="compositionally biased region" description="Polar residues" evidence="4">
    <location>
        <begin position="285"/>
        <end position="301"/>
    </location>
</feature>
<feature type="compositionally biased region" description="Polar residues" evidence="4">
    <location>
        <begin position="394"/>
        <end position="410"/>
    </location>
</feature>
<feature type="splice variant" id="VSP_057858" description="In isoform c." evidence="22">
    <location>
        <begin position="1"/>
        <end position="486"/>
    </location>
</feature>
<feature type="splice variant" id="VSP_057859" description="In isoform b." evidence="22">
    <location>
        <begin position="1"/>
        <end position="59"/>
    </location>
</feature>
<feature type="splice variant" id="VSP_057860" description="In isoform d." evidence="22">
    <original>MGTNGGVIAEQSMEIETNENPDKVEEPVVRRKRVTRRRHRRIHSKNNCLTPPNSDDD</original>
    <variation>MADNLLSSQNYINWTMLNKFYGK</variation>
    <location>
        <begin position="1"/>
        <end position="57"/>
    </location>
</feature>
<feature type="mutagenesis site" description="In sa156; no transcriptional activity in vitro. Defective dauer formation." evidence="5 10">
    <original>C</original>
    <variation>Y</variation>
    <location>
        <position position="121"/>
    </location>
</feature>
<feature type="mutagenesis site" description="In m420; no transcriptional activity in vitro. Defective dauer formation." evidence="5 10">
    <original>A</original>
    <variation>V</variation>
    <location>
        <position position="125"/>
    </location>
</feature>
<feature type="mutagenesis site" description="In m421; no transcriptional activity in vitro. Defective dauer formation." evidence="5 10">
    <original>S</original>
    <variation>F</variation>
    <location>
        <position position="137"/>
    </location>
</feature>
<feature type="mutagenesis site" description="In m116 and m423; no transcriptional activity in vitro. Defective dauer formation." evidence="5 6 10">
    <original>R</original>
    <variation>K</variation>
    <location>
        <position position="143"/>
    </location>
</feature>
<feature type="mutagenesis site" description="Defective nuclear localization; when associated with A-198." evidence="10">
    <original>R</original>
    <variation>A</variation>
    <location>
        <position position="195"/>
    </location>
</feature>
<feature type="mutagenesis site" description="Defective nuclear localization; when associated with A-198." evidence="10">
    <original>R</original>
    <variation>A</variation>
    <location>
        <position position="196"/>
    </location>
</feature>
<feature type="mutagenesis site" description="Small reduction in DNA binding in vitro." evidence="10">
    <original>R</original>
    <variation>K</variation>
    <location>
        <position position="196"/>
    </location>
</feature>
<feature type="mutagenesis site" description="Severely reduced DNA binding and reduced transcriptional activity in vitro." evidence="10">
    <original>R</original>
    <variation>A</variation>
    <location>
        <position position="197"/>
    </location>
</feature>
<feature type="mutagenesis site" description="In m424; reduced DNA binding affinity and transcriptional activity in vitro. Defective dauer formation." evidence="5 10">
    <original>R</original>
    <variation>K</variation>
    <location>
        <position position="197"/>
    </location>
</feature>
<feature type="mutagenesis site" description="Defective nuclear localization; when associated with A-195 or A-196." evidence="10">
    <original>K</original>
    <variation>A</variation>
    <location>
        <position position="198"/>
    </location>
</feature>
<feature type="mutagenesis site" description="In rh286; mild gonadal heterochrony." evidence="5">
    <original>C</original>
    <variation>Y</variation>
    <location>
        <position position="461"/>
    </location>
</feature>
<feature type="mutagenesis site" description="In m25; defective dauer formation." evidence="5">
    <original>M</original>
    <variation>I</variation>
    <location>
        <position position="562"/>
    </location>
</feature>
<feature type="mutagenesis site" description="In rh62 and rh274; dauer-constitutive phenotype with gonadal heterochrony." evidence="5">
    <original>R</original>
    <variation>C</variation>
    <location>
        <position position="564"/>
    </location>
</feature>
<feature type="mutagenesis site" description="In rh273; dauer-constitutive phenotype with gonadal heterochrony." evidence="5">
    <original>R</original>
    <variation>H</variation>
    <location>
        <position position="564"/>
    </location>
</feature>
<feature type="mutagenesis site" description="In rh193; temperature sensitive mutant." evidence="5">
    <original>G</original>
    <variation>K</variation>
    <location>
        <position position="582"/>
    </location>
</feature>
<feature type="mutagenesis site" description="In rh284; temperature sensitive mutation that prevents transcriptional activity and with gonadal heterochrony." evidence="5 16">
    <original>P</original>
    <variation>S</variation>
    <location>
        <position position="746"/>
    </location>
</feature>
<dbReference type="EMBL" id="AF136238">
    <property type="protein sequence ID" value="AAD34462.1"/>
    <property type="molecule type" value="mRNA"/>
</dbReference>
<dbReference type="EMBL" id="AF136239">
    <property type="protein sequence ID" value="AAD34463.1"/>
    <property type="molecule type" value="mRNA"/>
</dbReference>
<dbReference type="EMBL" id="AF136240">
    <property type="protein sequence ID" value="AAD34464.1"/>
    <property type="molecule type" value="mRNA"/>
</dbReference>
<dbReference type="EMBL" id="BX284606">
    <property type="protein sequence ID" value="CAC42283.1"/>
    <property type="molecule type" value="Genomic_DNA"/>
</dbReference>
<dbReference type="EMBL" id="BX284606">
    <property type="protein sequence ID" value="CAC42284.1"/>
    <property type="molecule type" value="Genomic_DNA"/>
</dbReference>
<dbReference type="EMBL" id="BX284606">
    <property type="protein sequence ID" value="CAC42285.1"/>
    <property type="molecule type" value="Genomic_DNA"/>
</dbReference>
<dbReference type="EMBL" id="BX284606">
    <property type="protein sequence ID" value="CAJ43436.1"/>
    <property type="molecule type" value="Genomic_DNA"/>
</dbReference>
<dbReference type="RefSeq" id="NP_001024547.1">
    <molecule id="G5EFF5-1"/>
    <property type="nucleotide sequence ID" value="NM_001029376.6"/>
</dbReference>
<dbReference type="RefSeq" id="NP_001024548.1">
    <property type="nucleotide sequence ID" value="NM_001029377.3"/>
</dbReference>
<dbReference type="RefSeq" id="NP_001024549.1">
    <property type="nucleotide sequence ID" value="NM_001029378.1"/>
</dbReference>
<dbReference type="RefSeq" id="NP_001041239.1">
    <molecule id="G5EFF5-4"/>
    <property type="nucleotide sequence ID" value="NM_001047774.5"/>
</dbReference>
<dbReference type="RefSeq" id="NP_001366986.1">
    <molecule id="G5EFF5-2"/>
    <property type="nucleotide sequence ID" value="NM_001381088.1"/>
</dbReference>
<dbReference type="RefSeq" id="NP_001366987.1">
    <molecule id="G5EFF5-3"/>
    <property type="nucleotide sequence ID" value="NM_001381089.2"/>
</dbReference>
<dbReference type="SMR" id="G5EFF5"/>
<dbReference type="FunCoup" id="G5EFF5">
    <property type="interactions" value="241"/>
</dbReference>
<dbReference type="IntAct" id="G5EFF5">
    <property type="interactions" value="2"/>
</dbReference>
<dbReference type="STRING" id="6239.F11A1.3a.1"/>
<dbReference type="BindingDB" id="G5EFF5"/>
<dbReference type="PaxDb" id="6239-F11A1.3a"/>
<dbReference type="PeptideAtlas" id="G5EFF5"/>
<dbReference type="EnsemblMetazoa" id="F11A1.3a.1">
    <molecule id="G5EFF5-1"/>
    <property type="protein sequence ID" value="F11A1.3a.1"/>
    <property type="gene ID" value="WBGene00000908"/>
</dbReference>
<dbReference type="EnsemblMetazoa" id="F11A1.3b.1">
    <molecule id="G5EFF5-2"/>
    <property type="protein sequence ID" value="F11A1.3b.1"/>
    <property type="gene ID" value="WBGene00000908"/>
</dbReference>
<dbReference type="EnsemblMetazoa" id="F11A1.3c.1">
    <molecule id="G5EFF5-3"/>
    <property type="protein sequence ID" value="F11A1.3c.1"/>
    <property type="gene ID" value="WBGene00000908"/>
</dbReference>
<dbReference type="EnsemblMetazoa" id="F11A1.3d.1">
    <molecule id="G5EFF5-4"/>
    <property type="protein sequence ID" value="F11A1.3d.1"/>
    <property type="gene ID" value="WBGene00000908"/>
</dbReference>
<dbReference type="GeneID" id="181263"/>
<dbReference type="KEGG" id="cel:CELE_F11A1.3"/>
<dbReference type="UCSC" id="F11A1.3a">
    <property type="organism name" value="c. elegans"/>
</dbReference>
<dbReference type="AGR" id="WB:WBGene00000908"/>
<dbReference type="CTD" id="181263"/>
<dbReference type="WormBase" id="F11A1.3a">
    <molecule id="G5EFF5-1"/>
    <property type="protein sequence ID" value="CE27584"/>
    <property type="gene ID" value="WBGene00000908"/>
    <property type="gene designation" value="daf-12"/>
</dbReference>
<dbReference type="WormBase" id="F11A1.3b">
    <molecule id="G5EFF5-2"/>
    <property type="protein sequence ID" value="CE27585"/>
    <property type="gene ID" value="WBGene00000908"/>
    <property type="gene designation" value="daf-12"/>
</dbReference>
<dbReference type="WormBase" id="F11A1.3c">
    <molecule id="G5EFF5-3"/>
    <property type="protein sequence ID" value="CE27586"/>
    <property type="gene ID" value="WBGene00000908"/>
    <property type="gene designation" value="daf-12"/>
</dbReference>
<dbReference type="WormBase" id="F11A1.3d">
    <molecule id="G5EFF5-4"/>
    <property type="protein sequence ID" value="CE39240"/>
    <property type="gene ID" value="WBGene00000908"/>
    <property type="gene designation" value="daf-12"/>
</dbReference>
<dbReference type="eggNOG" id="KOG3575">
    <property type="taxonomic scope" value="Eukaryota"/>
</dbReference>
<dbReference type="InParanoid" id="G5EFF5"/>
<dbReference type="OMA" id="GMDDPME"/>
<dbReference type="OrthoDB" id="6352325at2759"/>
<dbReference type="PhylomeDB" id="G5EFF5"/>
<dbReference type="Reactome" id="R-CEL-196791">
    <property type="pathway name" value="Vitamin D (calciferol) metabolism"/>
</dbReference>
<dbReference type="Reactome" id="R-CEL-383280">
    <property type="pathway name" value="Nuclear Receptor transcription pathway"/>
</dbReference>
<dbReference type="SignaLink" id="G5EFF5"/>
<dbReference type="PRO" id="PR:G5EFF5"/>
<dbReference type="Proteomes" id="UP000001940">
    <property type="component" value="Chromosome X"/>
</dbReference>
<dbReference type="Bgee" id="WBGene00000908">
    <property type="expression patterns" value="Expressed in larva and 3 other cell types or tissues"/>
</dbReference>
<dbReference type="GO" id="GO:0005634">
    <property type="term" value="C:nucleus"/>
    <property type="evidence" value="ECO:0000314"/>
    <property type="project" value="WormBase"/>
</dbReference>
<dbReference type="GO" id="GO:1902051">
    <property type="term" value="F:(25S)-Delta(4)-dafachronate binding"/>
    <property type="evidence" value="ECO:0000314"/>
    <property type="project" value="WormBase"/>
</dbReference>
<dbReference type="GO" id="GO:1902052">
    <property type="term" value="F:(25S)-Delta(7)-dafachronate binding"/>
    <property type="evidence" value="ECO:0000314"/>
    <property type="project" value="WormBase"/>
</dbReference>
<dbReference type="GO" id="GO:0003700">
    <property type="term" value="F:DNA-binding transcription factor activity"/>
    <property type="evidence" value="ECO:0000314"/>
    <property type="project" value="WormBase"/>
</dbReference>
<dbReference type="GO" id="GO:0004879">
    <property type="term" value="F:nuclear receptor activity"/>
    <property type="evidence" value="ECO:0000314"/>
    <property type="project" value="WormBase"/>
</dbReference>
<dbReference type="GO" id="GO:0000978">
    <property type="term" value="F:RNA polymerase II cis-regulatory region sequence-specific DNA binding"/>
    <property type="evidence" value="ECO:0000318"/>
    <property type="project" value="GO_Central"/>
</dbReference>
<dbReference type="GO" id="GO:0043565">
    <property type="term" value="F:sequence-specific DNA binding"/>
    <property type="evidence" value="ECO:0000314"/>
    <property type="project" value="WormBase"/>
</dbReference>
<dbReference type="GO" id="GO:0008270">
    <property type="term" value="F:zinc ion binding"/>
    <property type="evidence" value="ECO:0007669"/>
    <property type="project" value="UniProtKB-KW"/>
</dbReference>
<dbReference type="GO" id="GO:0030154">
    <property type="term" value="P:cell differentiation"/>
    <property type="evidence" value="ECO:0000318"/>
    <property type="project" value="GO_Central"/>
</dbReference>
<dbReference type="GO" id="GO:0006935">
    <property type="term" value="P:chemotaxis"/>
    <property type="evidence" value="ECO:0000316"/>
    <property type="project" value="UniProtKB"/>
</dbReference>
<dbReference type="GO" id="GO:0040024">
    <property type="term" value="P:dauer larval development"/>
    <property type="evidence" value="ECO:0000315"/>
    <property type="project" value="WormBase"/>
</dbReference>
<dbReference type="GO" id="GO:0008340">
    <property type="term" value="P:determination of adult lifespan"/>
    <property type="evidence" value="ECO:0000316"/>
    <property type="project" value="WormBase"/>
</dbReference>
<dbReference type="GO" id="GO:0010286">
    <property type="term" value="P:heat acclimation"/>
    <property type="evidence" value="ECO:0000316"/>
    <property type="project" value="UniProtKB"/>
</dbReference>
<dbReference type="GO" id="GO:0030522">
    <property type="term" value="P:intracellular receptor signaling pathway"/>
    <property type="evidence" value="ECO:0000318"/>
    <property type="project" value="GO_Central"/>
</dbReference>
<dbReference type="GO" id="GO:0060179">
    <property type="term" value="P:male mating behavior"/>
    <property type="evidence" value="ECO:0000315"/>
    <property type="project" value="WormBase"/>
</dbReference>
<dbReference type="GO" id="GO:0000122">
    <property type="term" value="P:negative regulation of transcription by RNA polymerase II"/>
    <property type="evidence" value="ECO:0000318"/>
    <property type="project" value="GO_Central"/>
</dbReference>
<dbReference type="GO" id="GO:0061066">
    <property type="term" value="P:positive regulation of dauer larval development"/>
    <property type="evidence" value="ECO:0000315"/>
    <property type="project" value="WormBase"/>
</dbReference>
<dbReference type="GO" id="GO:0045944">
    <property type="term" value="P:positive regulation of transcription by RNA polymerase II"/>
    <property type="evidence" value="ECO:0000314"/>
    <property type="project" value="WormBase"/>
</dbReference>
<dbReference type="GO" id="GO:0061065">
    <property type="term" value="P:regulation of dauer larval development"/>
    <property type="evidence" value="ECO:0000316"/>
    <property type="project" value="UniProtKB"/>
</dbReference>
<dbReference type="GO" id="GO:0040034">
    <property type="term" value="P:regulation of development, heterochronic"/>
    <property type="evidence" value="ECO:0000315"/>
    <property type="project" value="WormBase"/>
</dbReference>
<dbReference type="GO" id="GO:0043051">
    <property type="term" value="P:regulation of nematode pharyngeal pumping"/>
    <property type="evidence" value="ECO:0000315"/>
    <property type="project" value="WormBase"/>
</dbReference>
<dbReference type="CDD" id="cd06966">
    <property type="entry name" value="NR_DBD_CAR"/>
    <property type="match status" value="1"/>
</dbReference>
<dbReference type="CDD" id="cd06929">
    <property type="entry name" value="NR_LBD_F1"/>
    <property type="match status" value="1"/>
</dbReference>
<dbReference type="FunFam" id="3.30.50.10:FF:000042">
    <property type="entry name" value="Nuclear hormone receptor HR96"/>
    <property type="match status" value="1"/>
</dbReference>
<dbReference type="Gene3D" id="3.30.50.10">
    <property type="entry name" value="Erythroid Transcription Factor GATA-1, subunit A"/>
    <property type="match status" value="1"/>
</dbReference>
<dbReference type="Gene3D" id="1.10.565.10">
    <property type="entry name" value="Retinoid X Receptor"/>
    <property type="match status" value="1"/>
</dbReference>
<dbReference type="InterPro" id="IPR035500">
    <property type="entry name" value="NHR-like_dom_sf"/>
</dbReference>
<dbReference type="InterPro" id="IPR000536">
    <property type="entry name" value="Nucl_hrmn_rcpt_lig-bd"/>
</dbReference>
<dbReference type="InterPro" id="IPR050234">
    <property type="entry name" value="Nuclear_hormone_rcpt_NR1"/>
</dbReference>
<dbReference type="InterPro" id="IPR001628">
    <property type="entry name" value="Znf_hrmn_rcpt"/>
</dbReference>
<dbReference type="InterPro" id="IPR013088">
    <property type="entry name" value="Znf_NHR/GATA"/>
</dbReference>
<dbReference type="PANTHER" id="PTHR24082">
    <property type="entry name" value="NUCLEAR HORMONE RECEPTOR"/>
    <property type="match status" value="1"/>
</dbReference>
<dbReference type="PANTHER" id="PTHR24082:SF494">
    <property type="entry name" value="NUCLEAR HORMONE RECEPTOR FAMILY MEMBER DAF-12"/>
    <property type="match status" value="1"/>
</dbReference>
<dbReference type="Pfam" id="PF00105">
    <property type="entry name" value="zf-C4"/>
    <property type="match status" value="1"/>
</dbReference>
<dbReference type="PRINTS" id="PR00047">
    <property type="entry name" value="STROIDFINGER"/>
</dbReference>
<dbReference type="SMART" id="SM00430">
    <property type="entry name" value="HOLI"/>
    <property type="match status" value="1"/>
</dbReference>
<dbReference type="SMART" id="SM00399">
    <property type="entry name" value="ZnF_C4"/>
    <property type="match status" value="1"/>
</dbReference>
<dbReference type="SUPFAM" id="SSF57716">
    <property type="entry name" value="Glucocorticoid receptor-like (DNA-binding domain)"/>
    <property type="match status" value="1"/>
</dbReference>
<dbReference type="SUPFAM" id="SSF48508">
    <property type="entry name" value="Nuclear receptor ligand-binding domain"/>
    <property type="match status" value="1"/>
</dbReference>
<dbReference type="PROSITE" id="PS51843">
    <property type="entry name" value="NR_LBD"/>
    <property type="match status" value="1"/>
</dbReference>
<dbReference type="PROSITE" id="PS00031">
    <property type="entry name" value="NUCLEAR_REC_DBD_1"/>
    <property type="match status" value="1"/>
</dbReference>
<dbReference type="PROSITE" id="PS51030">
    <property type="entry name" value="NUCLEAR_REC_DBD_2"/>
    <property type="match status" value="1"/>
</dbReference>
<reference evidence="22" key="1">
    <citation type="journal article" date="2000" name="Biochim. Biophys. Acta">
        <title>Structure and expression of daf-12: a nuclear hormone receptor with three isoforms that are involved in development and aging in Caenorhabditis elegans.</title>
        <authorList>
            <person name="Snow M.I."/>
            <person name="Larsen P.L."/>
        </authorList>
    </citation>
    <scope>NUCLEOTIDE SEQUENCE [MRNA] (ISOFORMS A; B AND C)</scope>
    <scope>TISSUE SPECIFICITY</scope>
    <scope>MUTAGENESIS OF ARG-143</scope>
</reference>
<reference evidence="22" key="2">
    <citation type="journal article" date="2000" name="Genes Dev.">
        <title>daf-12 encodes a nuclear receptor that regulates the dauer diapause and developmental age in C. elegans.</title>
        <authorList>
            <person name="Antebi A."/>
            <person name="Yeh W.H."/>
            <person name="Tait D."/>
            <person name="Hedgecock E.M."/>
            <person name="Riddle D.L."/>
        </authorList>
    </citation>
    <scope>NUCLEOTIDE SEQUENCE [MRNA] (ISOFORMS A; B AND C)</scope>
    <scope>FUNCTION</scope>
    <scope>SUBCELLULAR LOCATION</scope>
    <scope>TISSUE SPECIFICITY</scope>
    <scope>DEVELOPMENTAL STAGE</scope>
    <scope>DISRUPTION PHENOTYPE</scope>
    <scope>MUTAGENESIS OF CYS-121; ALA-125; SER-137; ARG-143; ARG-197; CYS-461; MET-562; ARG-564; GLY-582 AND PRO-746</scope>
</reference>
<reference evidence="24" key="3">
    <citation type="journal article" date="1998" name="Science">
        <title>Genome sequence of the nematode C. elegans: a platform for investigating biology.</title>
        <authorList>
            <consortium name="The C. elegans sequencing consortium"/>
        </authorList>
    </citation>
    <scope>NUCLEOTIDE SEQUENCE [LARGE SCALE GENOMIC DNA]</scope>
    <source>
        <strain evidence="24">Bristol N2</strain>
    </source>
</reference>
<reference evidence="22" key="4">
    <citation type="journal article" date="1998" name="Development">
        <title>daf-12 regulates developmental age and the dauer alternative in Caenorhabditis elegans.</title>
        <authorList>
            <person name="Antebi A."/>
            <person name="Culotti J.G."/>
            <person name="Hedgecock E.M."/>
        </authorList>
    </citation>
    <scope>FUNCTION</scope>
    <scope>DISRUPTION PHENOTYPE</scope>
</reference>
<reference key="5">
    <citation type="journal article" date="2004" name="Genes Dev.">
        <title>A novel nuclear receptor/coregulator complex controls C. elegans lipid metabolism, larval development, and aging.</title>
        <authorList>
            <person name="Ludewig A.H."/>
            <person name="Kober-Eisermann C."/>
            <person name="Weitzel C."/>
            <person name="Bethke A."/>
            <person name="Neubert K."/>
            <person name="Gerisch B."/>
            <person name="Hutter H."/>
            <person name="Antebi A."/>
        </authorList>
    </citation>
    <scope>FUNCTION</scope>
    <scope>INTERACTION WITH DIN-1</scope>
</reference>
<reference evidence="22" key="6">
    <citation type="journal article" date="2004" name="Genes Dev.">
        <title>Identification of C. elegans DAF-12-binding sites, response elements, and target genes.</title>
        <authorList>
            <person name="Shostak Y."/>
            <person name="Van Gilst M.R."/>
            <person name="Antebi A."/>
            <person name="Yamamoto K.R."/>
        </authorList>
    </citation>
    <scope>FUNCTION</scope>
</reference>
<reference evidence="22" key="7">
    <citation type="journal article" date="2004" name="PLoS Biol.">
        <title>Sterol-derived hormone(s) controls entry into diapause in Caenorhabditis elegans by consecutive activation of DAF-12 and DAF-16.</title>
        <authorList>
            <person name="Matyash V."/>
            <person name="Entchev E.V."/>
            <person name="Mende F."/>
            <person name="Wilsch-Brauninger M."/>
            <person name="Thiele C."/>
            <person name="Schmidt A.W."/>
            <person name="Knolker H.J."/>
            <person name="Ward S."/>
            <person name="Kurzchalia T.V."/>
        </authorList>
    </citation>
    <scope>FUNCTION</scope>
    <scope>DISRUPTION PHENOTYPE</scope>
</reference>
<reference evidence="22" key="8">
    <citation type="journal article" date="2005" name="J. Biol. Chem.">
        <title>Overlapping but separable determinants of DNA binding and nuclear localization map to the C-terminal end of the Caenorhabditis elegans DAF-12 DNA binding domain.</title>
        <authorList>
            <person name="Shostak Y."/>
            <person name="Yamamoto K.R."/>
        </authorList>
    </citation>
    <scope>FUNCTION</scope>
    <scope>SUBCELLULAR LOCATION</scope>
    <scope>NUCLEAR LOCALIZATION SIGNAL</scope>
    <scope>MUTAGENESIS OF CYS-121; ALA-125; SER-137; ARG-143; ARG-196 AND ARG-197</scope>
</reference>
<reference evidence="22" key="9">
    <citation type="journal article" date="2006" name="Aging Cell">
        <title>The nuclear hormone receptor DAF-12 has opposing effects on Caenorhabditis elegans lifespan and regulates genes repressed in multiple long-lived worms.</title>
        <authorList>
            <person name="Fisher A.L."/>
            <person name="Lithgow G.J."/>
        </authorList>
    </citation>
    <scope>FUNCTION</scope>
    <scope>DISRUPTION PHENOTYPE</scope>
</reference>
<reference evidence="22" key="10">
    <citation type="journal article" date="2006" name="Cell">
        <title>Identification of ligands for DAF-12 that govern dauer formation and reproduction in C. elegans.</title>
        <authorList>
            <person name="Motola D.L."/>
            <person name="Cummins C.L."/>
            <person name="Rottiers V."/>
            <person name="Sharma K.K."/>
            <person name="Li T."/>
            <person name="Li Y."/>
            <person name="Suino-Powell K."/>
            <person name="Xu H.E."/>
            <person name="Auchus R.J."/>
            <person name="Antebi A."/>
            <person name="Mangelsdorf D.J."/>
        </authorList>
    </citation>
    <scope>FUNCTION</scope>
</reference>
<reference key="11">
    <citation type="journal article" date="2008" name="Dev. Biol.">
        <title>Insulin-like signaling negatively regulates muscle arm extension through DAF-12 in Caenorhabditis elegans.</title>
        <authorList>
            <person name="Dixon S.J."/>
            <person name="Alexander M."/>
            <person name="Chan K.K."/>
            <person name="Roy P.J."/>
        </authorList>
    </citation>
    <scope>DISRUPTION PHENOTYPE</scope>
</reference>
<reference key="12">
    <citation type="journal article" date="2009" name="Proc. Natl. Acad. Sci. U.S.A.">
        <title>A feedback circuit involving let-7-family miRNAs and DAF-12 integrates environmental signals and developmental timing in Caenorhabditis elegans.</title>
        <authorList>
            <person name="Hammell C.M."/>
            <person name="Karp X."/>
            <person name="Ambros V."/>
        </authorList>
    </citation>
    <scope>FUNCTION</scope>
</reference>
<reference key="13">
    <citation type="journal article" date="2011" name="Development">
        <title>The zinc-finger protein SEA-2 regulates larval developmental timing and adult lifespan in C. elegans.</title>
        <authorList>
            <person name="Huang X."/>
            <person name="Zhang H."/>
            <person name="Zhang H."/>
        </authorList>
    </citation>
    <scope>FUNCTION</scope>
</reference>
<reference key="14">
    <citation type="journal article" date="2011" name="PLoS Genet.">
        <title>DAF-12 regulates a connected network of genes to ensure robust developmental decisions.</title>
        <authorList>
            <person name="Hochbaum D."/>
            <person name="Zhang Y."/>
            <person name="Stuckenholz C."/>
            <person name="Labhart P."/>
            <person name="Alexiadis V."/>
            <person name="Martin R."/>
            <person name="Knolker H.J."/>
            <person name="Fisher A.L."/>
        </authorList>
    </citation>
    <scope>FUNCTION</scope>
</reference>
<reference key="15">
    <citation type="journal article" date="2013" name="PLoS Pathog.">
        <title>Nuclear hormone receptor regulation of microRNAs controls innate immune responses in C. elegans.</title>
        <authorList>
            <person name="Liu F."/>
            <person name="He C.X."/>
            <person name="Luo L.J."/>
            <person name="Zou Q.L."/>
            <person name="Zhao Y.X."/>
            <person name="Saini R."/>
            <person name="Han S.F."/>
            <person name="Knolker H.J."/>
            <person name="Wang L.S."/>
            <person name="Ge B.X."/>
        </authorList>
    </citation>
    <scope>FUNCTION</scope>
    <scope>SUBCELLULAR LOCATION</scope>
    <scope>TISSUE SPECIFICITY</scope>
    <scope>DISRUPTION PHENOTYPE</scope>
</reference>
<reference key="16">
    <citation type="journal article" date="2014" name="Genes Nutr.">
        <title>The zinc matrix metalloproteinase ZMP-2 increases survival of Caenorhabditis elegans through interference with lipoprotein absorption.</title>
        <authorList>
            <person name="Fischer M."/>
            <person name="Fitzenberger E."/>
            <person name="Kull R."/>
            <person name="Boll M."/>
            <person name="Wenzel U."/>
        </authorList>
    </citation>
    <scope>FUNCTION</scope>
</reference>
<reference key="17">
    <citation type="journal article" date="2015" name="PLoS Genet.">
        <title>The nuclear receptor DAF-12 regulates nutrient metabolism and reproductive growth in nematodes.</title>
        <authorList>
            <person name="Wang Z."/>
            <person name="Stoltzfus J."/>
            <person name="You Y.J."/>
            <person name="Ranjit N."/>
            <person name="Tang H."/>
            <person name="Xie Y."/>
            <person name="Lok J.B."/>
            <person name="Mangelsdorf D.J."/>
            <person name="Kliewer S.A."/>
        </authorList>
    </citation>
    <scope>FUNCTION</scope>
</reference>
<keyword id="KW-0024">Alternative initiation</keyword>
<keyword id="KW-0025">Alternative splicing</keyword>
<keyword id="KW-0217">Developmental protein</keyword>
<keyword id="KW-0238">DNA-binding</keyword>
<keyword id="KW-0479">Metal-binding</keyword>
<keyword id="KW-0539">Nucleus</keyword>
<keyword id="KW-0675">Receptor</keyword>
<keyword id="KW-1185">Reference proteome</keyword>
<keyword id="KW-0804">Transcription</keyword>
<keyword id="KW-0805">Transcription regulation</keyword>
<keyword id="KW-0862">Zinc</keyword>
<keyword id="KW-0863">Zinc-finger</keyword>
<evidence type="ECO:0000255" key="1">
    <source>
        <dbReference type="PROSITE-ProRule" id="PRU00407"/>
    </source>
</evidence>
<evidence type="ECO:0000255" key="2">
    <source>
        <dbReference type="PROSITE-ProRule" id="PRU01189"/>
    </source>
</evidence>
<evidence type="ECO:0000255" key="3">
    <source>
        <dbReference type="RuleBase" id="RU000377"/>
    </source>
</evidence>
<evidence type="ECO:0000256" key="4">
    <source>
        <dbReference type="SAM" id="MobiDB-lite"/>
    </source>
</evidence>
<evidence type="ECO:0000269" key="5">
    <source>
    </source>
</evidence>
<evidence type="ECO:0000269" key="6">
    <source>
    </source>
</evidence>
<evidence type="ECO:0000269" key="7">
    <source>
    </source>
</evidence>
<evidence type="ECO:0000269" key="8">
    <source>
    </source>
</evidence>
<evidence type="ECO:0000269" key="9">
    <source>
    </source>
</evidence>
<evidence type="ECO:0000269" key="10">
    <source>
    </source>
</evidence>
<evidence type="ECO:0000269" key="11">
    <source>
    </source>
</evidence>
<evidence type="ECO:0000269" key="12">
    <source>
    </source>
</evidence>
<evidence type="ECO:0000269" key="13">
    <source>
    </source>
</evidence>
<evidence type="ECO:0000269" key="14">
    <source>
    </source>
</evidence>
<evidence type="ECO:0000269" key="15">
    <source>
    </source>
</evidence>
<evidence type="ECO:0000269" key="16">
    <source>
    </source>
</evidence>
<evidence type="ECO:0000269" key="17">
    <source>
    </source>
</evidence>
<evidence type="ECO:0000269" key="18">
    <source>
    </source>
</evidence>
<evidence type="ECO:0000269" key="19">
    <source>
    </source>
</evidence>
<evidence type="ECO:0000269" key="20">
    <source>
    </source>
</evidence>
<evidence type="ECO:0000303" key="21">
    <source>
    </source>
</evidence>
<evidence type="ECO:0000305" key="22"/>
<evidence type="ECO:0000312" key="23">
    <source>
        <dbReference type="EMBL" id="AAD34462.1"/>
    </source>
</evidence>
<evidence type="ECO:0000312" key="24">
    <source>
        <dbReference type="Proteomes" id="UP000001940"/>
    </source>
</evidence>
<evidence type="ECO:0000312" key="25">
    <source>
        <dbReference type="WormBase" id="F11A1.3a"/>
    </source>
</evidence>
<evidence type="ECO:0000312" key="26">
    <source>
        <dbReference type="WormBase" id="F11A1.3b"/>
    </source>
</evidence>
<evidence type="ECO:0000312" key="27">
    <source>
        <dbReference type="WormBase" id="F11A1.3c"/>
    </source>
</evidence>
<evidence type="ECO:0000312" key="28">
    <source>
        <dbReference type="WormBase" id="F11A1.3d"/>
    </source>
</evidence>
<proteinExistence type="evidence at protein level"/>
<protein>
    <recommendedName>
        <fullName evidence="22">Nuclear hormone receptor family member daf-12</fullName>
    </recommendedName>
    <alternativeName>
        <fullName evidence="25">Abnormal dauer formation protein 12</fullName>
    </alternativeName>
</protein>
<sequence>MGTNGGVIAEQSMEIETNENPDKVEEPVVRRKRVTRRRHRRIHSKNNCLTPPNSDDDPQMSTPDDPVIHSPPSIGAAPGMNGYHGSGVKLEESSGACGSPDDGLLDSSEESRRRQKTCRVCGDHATGYNFNVITCESCKAFFRRNALRPKEFKCPYSEDCEINSVSRRFCQKCRLRKCFTVGMKKEWILNEEQLRRRKNSRLNNTGTCNKRSQPGNQQSPQGPNQQPHLSPHHPGVAIYPPQPQRPLTINPMDNQMMHHMQANRPNAMPQLISPPGAQPYPLTSPVGSSASDSPPNRSLTMMHNGEKSPDGYDPNIMAHRAPPPSFNNRPKMDSGQVVLSTEEYKQLLSRIPGAQVPGLMNEEEPINKRAAYNCNGHPMPAETTPPYSAPMSDMSLSRHNSTSSGTEKNHMTHSTVSAIPGNSAQNHFDIASFGMGIVTATGGGDAAEEMYKRMNMFYENCIQSALDSPENQEPKPQEAMIPKEEYMTPTHGFQYQSDPYQVPPAERNINYQLNAAELKALDAVREAFYGMDDPMEQGRQMQSFLKANKTPADIMNIMDVTMRRFVKVAKGVPAFREVSQEGKFSLLKGGMIEMLTVRGVTRYDASTNSFKTPTIKGQNVSVNVDDMFAKLNANAQAQKAKCLEFFGFFDEEIKKNELAVYLVMLAVLFSVRSDPPMNENDVRIVTERHNHFMSLLNRYLESLFGEQARRIFERIPKALGLLNEIARNAGMLFMGTVRSGEAEELPGEFFKIK</sequence>